<proteinExistence type="inferred from homology"/>
<accession>C1EVE5</accession>
<dbReference type="EC" id="2.7.1.50" evidence="1"/>
<dbReference type="EMBL" id="CP001407">
    <property type="protein sequence ID" value="ACO28717.1"/>
    <property type="molecule type" value="Genomic_DNA"/>
</dbReference>
<dbReference type="RefSeq" id="WP_001056087.1">
    <property type="nucleotide sequence ID" value="NZ_CP009318.1"/>
</dbReference>
<dbReference type="SMR" id="C1EVE5"/>
<dbReference type="KEGG" id="bcx:BCA_0454"/>
<dbReference type="PATRIC" id="fig|572264.18.peg.440"/>
<dbReference type="UniPathway" id="UPA00060">
    <property type="reaction ID" value="UER00139"/>
</dbReference>
<dbReference type="Proteomes" id="UP000002210">
    <property type="component" value="Chromosome"/>
</dbReference>
<dbReference type="GO" id="GO:0005524">
    <property type="term" value="F:ATP binding"/>
    <property type="evidence" value="ECO:0007669"/>
    <property type="project" value="UniProtKB-UniRule"/>
</dbReference>
<dbReference type="GO" id="GO:0004417">
    <property type="term" value="F:hydroxyethylthiazole kinase activity"/>
    <property type="evidence" value="ECO:0007669"/>
    <property type="project" value="UniProtKB-UniRule"/>
</dbReference>
<dbReference type="GO" id="GO:0000287">
    <property type="term" value="F:magnesium ion binding"/>
    <property type="evidence" value="ECO:0007669"/>
    <property type="project" value="UniProtKB-UniRule"/>
</dbReference>
<dbReference type="GO" id="GO:0009228">
    <property type="term" value="P:thiamine biosynthetic process"/>
    <property type="evidence" value="ECO:0007669"/>
    <property type="project" value="UniProtKB-KW"/>
</dbReference>
<dbReference type="GO" id="GO:0009229">
    <property type="term" value="P:thiamine diphosphate biosynthetic process"/>
    <property type="evidence" value="ECO:0007669"/>
    <property type="project" value="UniProtKB-UniRule"/>
</dbReference>
<dbReference type="CDD" id="cd01170">
    <property type="entry name" value="THZ_kinase"/>
    <property type="match status" value="1"/>
</dbReference>
<dbReference type="FunFam" id="3.40.1190.20:FF:000027">
    <property type="entry name" value="Hydroxyethylthiazole kinase"/>
    <property type="match status" value="1"/>
</dbReference>
<dbReference type="Gene3D" id="3.40.1190.20">
    <property type="match status" value="1"/>
</dbReference>
<dbReference type="HAMAP" id="MF_00228">
    <property type="entry name" value="Thz_kinase"/>
    <property type="match status" value="1"/>
</dbReference>
<dbReference type="InterPro" id="IPR000417">
    <property type="entry name" value="Hyethyz_kinase"/>
</dbReference>
<dbReference type="InterPro" id="IPR029056">
    <property type="entry name" value="Ribokinase-like"/>
</dbReference>
<dbReference type="NCBIfam" id="NF006830">
    <property type="entry name" value="PRK09355.1"/>
    <property type="match status" value="1"/>
</dbReference>
<dbReference type="NCBIfam" id="TIGR00694">
    <property type="entry name" value="thiM"/>
    <property type="match status" value="1"/>
</dbReference>
<dbReference type="Pfam" id="PF02110">
    <property type="entry name" value="HK"/>
    <property type="match status" value="1"/>
</dbReference>
<dbReference type="PIRSF" id="PIRSF000513">
    <property type="entry name" value="Thz_kinase"/>
    <property type="match status" value="1"/>
</dbReference>
<dbReference type="PRINTS" id="PR01099">
    <property type="entry name" value="HYETHTZKNASE"/>
</dbReference>
<dbReference type="SUPFAM" id="SSF53613">
    <property type="entry name" value="Ribokinase-like"/>
    <property type="match status" value="1"/>
</dbReference>
<reference key="1">
    <citation type="submission" date="2009-02" db="EMBL/GenBank/DDBJ databases">
        <title>Genome sequence of Bacillus cereus 03BB102.</title>
        <authorList>
            <person name="Dodson R.J."/>
            <person name="Jackson P."/>
            <person name="Munk A.C."/>
            <person name="Brettin T."/>
            <person name="Bruce D."/>
            <person name="Detter C."/>
            <person name="Tapia R."/>
            <person name="Han C."/>
            <person name="Sutton G."/>
            <person name="Sims D."/>
        </authorList>
    </citation>
    <scope>NUCLEOTIDE SEQUENCE [LARGE SCALE GENOMIC DNA]</scope>
    <source>
        <strain>03BB102</strain>
    </source>
</reference>
<sequence>MNMKEISKVVDLVRESNPLVHNITNVVVTNFTANGLLALGASPVMAYAKEEVAEMASIAGALVLNMGTLRPDEVEAMLLAGKSANRNDVPVLFDPVGAGATSYRTEVARHIPAEIELAIIRGNAAEIANVINEKWEIKGVDAGAGNGNVVSIAKQAADELNTVAVITGKEDVVTDGERTIVIRNGHSILTKITGTGCLLTSVIGAFVAVEKDYVKAAVAALTFYGVAAELAAAKTVEKGPGSFQIEFLNQLANTTSGDIEKYGKIEVI</sequence>
<name>THIM_BACC3</name>
<evidence type="ECO:0000255" key="1">
    <source>
        <dbReference type="HAMAP-Rule" id="MF_00228"/>
    </source>
</evidence>
<protein>
    <recommendedName>
        <fullName evidence="1">Hydroxyethylthiazole kinase</fullName>
        <ecNumber evidence="1">2.7.1.50</ecNumber>
    </recommendedName>
    <alternativeName>
        <fullName evidence="1">4-methyl-5-beta-hydroxyethylthiazole kinase</fullName>
        <shortName evidence="1">TH kinase</shortName>
        <shortName evidence="1">Thz kinase</shortName>
    </alternativeName>
</protein>
<organism>
    <name type="scientific">Bacillus cereus (strain 03BB102)</name>
    <dbReference type="NCBI Taxonomy" id="572264"/>
    <lineage>
        <taxon>Bacteria</taxon>
        <taxon>Bacillati</taxon>
        <taxon>Bacillota</taxon>
        <taxon>Bacilli</taxon>
        <taxon>Bacillales</taxon>
        <taxon>Bacillaceae</taxon>
        <taxon>Bacillus</taxon>
        <taxon>Bacillus cereus group</taxon>
    </lineage>
</organism>
<gene>
    <name evidence="1" type="primary">thiM</name>
    <name type="ordered locus">BCA_0454</name>
</gene>
<comment type="function">
    <text evidence="1">Catalyzes the phosphorylation of the hydroxyl group of 4-methyl-5-beta-hydroxyethylthiazole (THZ).</text>
</comment>
<comment type="catalytic activity">
    <reaction evidence="1">
        <text>5-(2-hydroxyethyl)-4-methylthiazole + ATP = 4-methyl-5-(2-phosphooxyethyl)-thiazole + ADP + H(+)</text>
        <dbReference type="Rhea" id="RHEA:24212"/>
        <dbReference type="ChEBI" id="CHEBI:15378"/>
        <dbReference type="ChEBI" id="CHEBI:17957"/>
        <dbReference type="ChEBI" id="CHEBI:30616"/>
        <dbReference type="ChEBI" id="CHEBI:58296"/>
        <dbReference type="ChEBI" id="CHEBI:456216"/>
        <dbReference type="EC" id="2.7.1.50"/>
    </reaction>
</comment>
<comment type="cofactor">
    <cofactor evidence="1">
        <name>Mg(2+)</name>
        <dbReference type="ChEBI" id="CHEBI:18420"/>
    </cofactor>
</comment>
<comment type="pathway">
    <text evidence="1">Cofactor biosynthesis; thiamine diphosphate biosynthesis; 4-methyl-5-(2-phosphoethyl)-thiazole from 5-(2-hydroxyethyl)-4-methylthiazole: step 1/1.</text>
</comment>
<comment type="similarity">
    <text evidence="1">Belongs to the Thz kinase family.</text>
</comment>
<feature type="chain" id="PRO_1000198104" description="Hydroxyethylthiazole kinase">
    <location>
        <begin position="1"/>
        <end position="268"/>
    </location>
</feature>
<feature type="binding site" evidence="1">
    <location>
        <position position="45"/>
    </location>
    <ligand>
        <name>substrate</name>
    </ligand>
</feature>
<feature type="binding site" evidence="1">
    <location>
        <position position="121"/>
    </location>
    <ligand>
        <name>ATP</name>
        <dbReference type="ChEBI" id="CHEBI:30616"/>
    </ligand>
</feature>
<feature type="binding site" evidence="1">
    <location>
        <position position="167"/>
    </location>
    <ligand>
        <name>ATP</name>
        <dbReference type="ChEBI" id="CHEBI:30616"/>
    </ligand>
</feature>
<feature type="binding site" evidence="1">
    <location>
        <position position="194"/>
    </location>
    <ligand>
        <name>substrate</name>
    </ligand>
</feature>
<keyword id="KW-0067">ATP-binding</keyword>
<keyword id="KW-0418">Kinase</keyword>
<keyword id="KW-0460">Magnesium</keyword>
<keyword id="KW-0479">Metal-binding</keyword>
<keyword id="KW-0547">Nucleotide-binding</keyword>
<keyword id="KW-0784">Thiamine biosynthesis</keyword>
<keyword id="KW-0808">Transferase</keyword>